<reference key="1">
    <citation type="journal article" date="2010" name="Genome Biol.">
        <title>Structure and dynamics of the pan-genome of Streptococcus pneumoniae and closely related species.</title>
        <authorList>
            <person name="Donati C."/>
            <person name="Hiller N.L."/>
            <person name="Tettelin H."/>
            <person name="Muzzi A."/>
            <person name="Croucher N.J."/>
            <person name="Angiuoli S.V."/>
            <person name="Oggioni M."/>
            <person name="Dunning Hotopp J.C."/>
            <person name="Hu F.Z."/>
            <person name="Riley D.R."/>
            <person name="Covacci A."/>
            <person name="Mitchell T.J."/>
            <person name="Bentley S.D."/>
            <person name="Kilian M."/>
            <person name="Ehrlich G.D."/>
            <person name="Rappuoli R."/>
            <person name="Moxon E.R."/>
            <person name="Masignani V."/>
        </authorList>
    </citation>
    <scope>NUCLEOTIDE SEQUENCE [LARGE SCALE GENOMIC DNA]</scope>
    <source>
        <strain>P1031</strain>
    </source>
</reference>
<sequence length="514" mass="58513">MNIQEEIKKRRTFAIISHPDAGKTTITEQLLYFGGEIRDAGTVKGKKTGTFAKSDWMDIEKQRGISVTSSVMQFDYDGKRVNILDTPGHEDFSEDTYRTLMAVDAAVMVVDSAKGIEAQTKKLFEVVKHRGIPVFTFMNKLDRDGREPLDLLQELEEILGIASYPMNWPIGMGKAFEGLYDLYNQRLELYKGDERFASLEDGDKLFGSNPFYEQVKDDIELLNEAGNEFSEEAILAGELTPVFFGSALTNFGVQTFLEIFLKFAPEPHGHKKTDGEIVDPYDKDFSGFVFKIQANMDPRHRDRIAFVRIVSGEFERGMSVNLPRTGKGAKLSNVTQFMAESRENVTNAVAGDIIGVYDTGTYQVGDTLTVGKNKFEFEPLPTFTPEIFMKVSAKNVMKQKSFHKGIEQLVQEGAVQLYKNYQTGEYMLGAVGQLQFEVFKHRMESEYNAEVVMNPMGKKTVRWIKPEDLDERMSSSRNILAKDRFDQPVFLFENDFALRWFADKYPDVELEEKM</sequence>
<organism>
    <name type="scientific">Streptococcus pneumoniae (strain P1031)</name>
    <dbReference type="NCBI Taxonomy" id="488223"/>
    <lineage>
        <taxon>Bacteria</taxon>
        <taxon>Bacillati</taxon>
        <taxon>Bacillota</taxon>
        <taxon>Bacilli</taxon>
        <taxon>Lactobacillales</taxon>
        <taxon>Streptococcaceae</taxon>
        <taxon>Streptococcus</taxon>
    </lineage>
</organism>
<accession>C1CIU0</accession>
<feature type="chain" id="PRO_1000193539" description="Peptide chain release factor 3">
    <location>
        <begin position="1"/>
        <end position="514"/>
    </location>
</feature>
<feature type="domain" description="tr-type G">
    <location>
        <begin position="8"/>
        <end position="268"/>
    </location>
</feature>
<feature type="binding site" evidence="1">
    <location>
        <begin position="17"/>
        <end position="24"/>
    </location>
    <ligand>
        <name>GTP</name>
        <dbReference type="ChEBI" id="CHEBI:37565"/>
    </ligand>
</feature>
<feature type="binding site" evidence="1">
    <location>
        <begin position="85"/>
        <end position="89"/>
    </location>
    <ligand>
        <name>GTP</name>
        <dbReference type="ChEBI" id="CHEBI:37565"/>
    </ligand>
</feature>
<feature type="binding site" evidence="1">
    <location>
        <begin position="139"/>
        <end position="142"/>
    </location>
    <ligand>
        <name>GTP</name>
        <dbReference type="ChEBI" id="CHEBI:37565"/>
    </ligand>
</feature>
<dbReference type="EMBL" id="CP000920">
    <property type="protein sequence ID" value="ACO22146.1"/>
    <property type="molecule type" value="Genomic_DNA"/>
</dbReference>
<dbReference type="RefSeq" id="WP_001025408.1">
    <property type="nucleotide sequence ID" value="NC_012467.1"/>
</dbReference>
<dbReference type="SMR" id="C1CIU0"/>
<dbReference type="KEGG" id="spp:SPP_0470"/>
<dbReference type="HOGENOM" id="CLU_002794_2_1_9"/>
<dbReference type="GO" id="GO:0005829">
    <property type="term" value="C:cytosol"/>
    <property type="evidence" value="ECO:0007669"/>
    <property type="project" value="TreeGrafter"/>
</dbReference>
<dbReference type="GO" id="GO:0005525">
    <property type="term" value="F:GTP binding"/>
    <property type="evidence" value="ECO:0007669"/>
    <property type="project" value="UniProtKB-UniRule"/>
</dbReference>
<dbReference type="GO" id="GO:0003924">
    <property type="term" value="F:GTPase activity"/>
    <property type="evidence" value="ECO:0007669"/>
    <property type="project" value="InterPro"/>
</dbReference>
<dbReference type="GO" id="GO:0016150">
    <property type="term" value="F:translation release factor activity, codon nonspecific"/>
    <property type="evidence" value="ECO:0007669"/>
    <property type="project" value="TreeGrafter"/>
</dbReference>
<dbReference type="GO" id="GO:0016149">
    <property type="term" value="F:translation release factor activity, codon specific"/>
    <property type="evidence" value="ECO:0007669"/>
    <property type="project" value="UniProtKB-UniRule"/>
</dbReference>
<dbReference type="GO" id="GO:0006449">
    <property type="term" value="P:regulation of translational termination"/>
    <property type="evidence" value="ECO:0007669"/>
    <property type="project" value="UniProtKB-UniRule"/>
</dbReference>
<dbReference type="CDD" id="cd04169">
    <property type="entry name" value="RF3"/>
    <property type="match status" value="1"/>
</dbReference>
<dbReference type="CDD" id="cd16259">
    <property type="entry name" value="RF3_III"/>
    <property type="match status" value="1"/>
</dbReference>
<dbReference type="FunFam" id="2.40.30.10:FF:000040">
    <property type="entry name" value="Peptide chain release factor 3"/>
    <property type="match status" value="1"/>
</dbReference>
<dbReference type="FunFam" id="3.30.70.3280:FF:000001">
    <property type="entry name" value="Peptide chain release factor 3"/>
    <property type="match status" value="1"/>
</dbReference>
<dbReference type="FunFam" id="3.40.50.300:FF:000542">
    <property type="entry name" value="Peptide chain release factor 3"/>
    <property type="match status" value="1"/>
</dbReference>
<dbReference type="Gene3D" id="3.40.50.300">
    <property type="entry name" value="P-loop containing nucleotide triphosphate hydrolases"/>
    <property type="match status" value="1"/>
</dbReference>
<dbReference type="Gene3D" id="3.30.70.3280">
    <property type="entry name" value="Peptide chain release factor 3, domain III"/>
    <property type="match status" value="1"/>
</dbReference>
<dbReference type="Gene3D" id="2.40.30.10">
    <property type="entry name" value="Translation factors"/>
    <property type="match status" value="1"/>
</dbReference>
<dbReference type="HAMAP" id="MF_00072">
    <property type="entry name" value="Rel_fac_3"/>
    <property type="match status" value="1"/>
</dbReference>
<dbReference type="InterPro" id="IPR053905">
    <property type="entry name" value="EF-G-like_DII"/>
</dbReference>
<dbReference type="InterPro" id="IPR035647">
    <property type="entry name" value="EFG_III/V"/>
</dbReference>
<dbReference type="InterPro" id="IPR031157">
    <property type="entry name" value="G_TR_CS"/>
</dbReference>
<dbReference type="InterPro" id="IPR027417">
    <property type="entry name" value="P-loop_NTPase"/>
</dbReference>
<dbReference type="InterPro" id="IPR004548">
    <property type="entry name" value="PrfC"/>
</dbReference>
<dbReference type="InterPro" id="IPR032090">
    <property type="entry name" value="RF3_C"/>
</dbReference>
<dbReference type="InterPro" id="IPR038467">
    <property type="entry name" value="RF3_dom_3_sf"/>
</dbReference>
<dbReference type="InterPro" id="IPR041732">
    <property type="entry name" value="RF3_GTP-bd"/>
</dbReference>
<dbReference type="InterPro" id="IPR005225">
    <property type="entry name" value="Small_GTP-bd"/>
</dbReference>
<dbReference type="InterPro" id="IPR000795">
    <property type="entry name" value="T_Tr_GTP-bd_dom"/>
</dbReference>
<dbReference type="InterPro" id="IPR009000">
    <property type="entry name" value="Transl_B-barrel_sf"/>
</dbReference>
<dbReference type="NCBIfam" id="TIGR00503">
    <property type="entry name" value="prfC"/>
    <property type="match status" value="1"/>
</dbReference>
<dbReference type="NCBIfam" id="NF001964">
    <property type="entry name" value="PRK00741.1"/>
    <property type="match status" value="1"/>
</dbReference>
<dbReference type="NCBIfam" id="TIGR00231">
    <property type="entry name" value="small_GTP"/>
    <property type="match status" value="1"/>
</dbReference>
<dbReference type="PANTHER" id="PTHR43556">
    <property type="entry name" value="PEPTIDE CHAIN RELEASE FACTOR RF3"/>
    <property type="match status" value="1"/>
</dbReference>
<dbReference type="PANTHER" id="PTHR43556:SF2">
    <property type="entry name" value="PEPTIDE CHAIN RELEASE FACTOR RF3"/>
    <property type="match status" value="1"/>
</dbReference>
<dbReference type="Pfam" id="PF22042">
    <property type="entry name" value="EF-G_D2"/>
    <property type="match status" value="1"/>
</dbReference>
<dbReference type="Pfam" id="PF00009">
    <property type="entry name" value="GTP_EFTU"/>
    <property type="match status" value="1"/>
</dbReference>
<dbReference type="Pfam" id="PF16658">
    <property type="entry name" value="RF3_C"/>
    <property type="match status" value="1"/>
</dbReference>
<dbReference type="PRINTS" id="PR00315">
    <property type="entry name" value="ELONGATNFCT"/>
</dbReference>
<dbReference type="PRINTS" id="PR01037">
    <property type="entry name" value="TCRTETOQM"/>
</dbReference>
<dbReference type="SUPFAM" id="SSF54980">
    <property type="entry name" value="EF-G C-terminal domain-like"/>
    <property type="match status" value="1"/>
</dbReference>
<dbReference type="SUPFAM" id="SSF52540">
    <property type="entry name" value="P-loop containing nucleoside triphosphate hydrolases"/>
    <property type="match status" value="1"/>
</dbReference>
<dbReference type="SUPFAM" id="SSF50447">
    <property type="entry name" value="Translation proteins"/>
    <property type="match status" value="1"/>
</dbReference>
<dbReference type="PROSITE" id="PS00301">
    <property type="entry name" value="G_TR_1"/>
    <property type="match status" value="1"/>
</dbReference>
<dbReference type="PROSITE" id="PS51722">
    <property type="entry name" value="G_TR_2"/>
    <property type="match status" value="1"/>
</dbReference>
<protein>
    <recommendedName>
        <fullName evidence="1">Peptide chain release factor 3</fullName>
        <shortName evidence="1">RF-3</shortName>
    </recommendedName>
</protein>
<proteinExistence type="inferred from homology"/>
<name>RF3_STRZP</name>
<evidence type="ECO:0000255" key="1">
    <source>
        <dbReference type="HAMAP-Rule" id="MF_00072"/>
    </source>
</evidence>
<keyword id="KW-0963">Cytoplasm</keyword>
<keyword id="KW-0342">GTP-binding</keyword>
<keyword id="KW-0547">Nucleotide-binding</keyword>
<keyword id="KW-0648">Protein biosynthesis</keyword>
<comment type="function">
    <text evidence="1">Increases the formation of ribosomal termination complexes and stimulates activities of RF-1 and RF-2. It binds guanine nucleotides and has strong preference for UGA stop codons. It may interact directly with the ribosome. The stimulation of RF-1 and RF-2 is significantly reduced by GTP and GDP, but not by GMP.</text>
</comment>
<comment type="subcellular location">
    <subcellularLocation>
        <location evidence="1">Cytoplasm</location>
    </subcellularLocation>
</comment>
<comment type="similarity">
    <text evidence="1">Belongs to the TRAFAC class translation factor GTPase superfamily. Classic translation factor GTPase family. PrfC subfamily.</text>
</comment>
<gene>
    <name evidence="1" type="primary">prfC</name>
    <name type="ordered locus">SPP_0470</name>
</gene>